<accession>B7KCB8</accession>
<proteinExistence type="inferred from homology"/>
<keyword id="KW-0143">Chaperone</keyword>
<keyword id="KW-0963">Cytoplasm</keyword>
<keyword id="KW-1185">Reference proteome</keyword>
<name>CH10_GLOC7</name>
<sequence>MAAISINVSTVKPLGDRVFVKVSPSEEKTAGGILLPDTAKEKPQLGEVVAVGPGKRNDDGSRSPIEVKVGDKVLYSKYAGTDIKLGGEDYVLLSEKDILAGVA</sequence>
<protein>
    <recommendedName>
        <fullName evidence="1">Co-chaperonin GroES</fullName>
    </recommendedName>
    <alternativeName>
        <fullName evidence="1">10 kDa chaperonin</fullName>
    </alternativeName>
    <alternativeName>
        <fullName evidence="1">Chaperonin-10</fullName>
        <shortName evidence="1">Cpn10</shortName>
    </alternativeName>
</protein>
<reference key="1">
    <citation type="journal article" date="2011" name="MBio">
        <title>Novel metabolic attributes of the genus Cyanothece, comprising a group of unicellular nitrogen-fixing Cyanobacteria.</title>
        <authorList>
            <person name="Bandyopadhyay A."/>
            <person name="Elvitigala T."/>
            <person name="Welsh E."/>
            <person name="Stockel J."/>
            <person name="Liberton M."/>
            <person name="Min H."/>
            <person name="Sherman L.A."/>
            <person name="Pakrasi H.B."/>
        </authorList>
    </citation>
    <scope>NUCLEOTIDE SEQUENCE [LARGE SCALE GENOMIC DNA]</scope>
    <source>
        <strain>PCC 7424</strain>
    </source>
</reference>
<evidence type="ECO:0000255" key="1">
    <source>
        <dbReference type="HAMAP-Rule" id="MF_00580"/>
    </source>
</evidence>
<organism>
    <name type="scientific">Gloeothece citriformis (strain PCC 7424)</name>
    <name type="common">Cyanothece sp. (strain PCC 7424)</name>
    <dbReference type="NCBI Taxonomy" id="65393"/>
    <lineage>
        <taxon>Bacteria</taxon>
        <taxon>Bacillati</taxon>
        <taxon>Cyanobacteriota</taxon>
        <taxon>Cyanophyceae</taxon>
        <taxon>Oscillatoriophycideae</taxon>
        <taxon>Chroococcales</taxon>
        <taxon>Aphanothecaceae</taxon>
        <taxon>Gloeothece</taxon>
        <taxon>Gloeothece citriformis</taxon>
    </lineage>
</organism>
<dbReference type="EMBL" id="CP001291">
    <property type="protein sequence ID" value="ACK70223.1"/>
    <property type="molecule type" value="Genomic_DNA"/>
</dbReference>
<dbReference type="RefSeq" id="WP_012599166.1">
    <property type="nucleotide sequence ID" value="NC_011729.1"/>
</dbReference>
<dbReference type="SMR" id="B7KCB8"/>
<dbReference type="STRING" id="65393.PCC7424_1789"/>
<dbReference type="KEGG" id="cyc:PCC7424_1789"/>
<dbReference type="eggNOG" id="COG0234">
    <property type="taxonomic scope" value="Bacteria"/>
</dbReference>
<dbReference type="HOGENOM" id="CLU_132825_2_1_3"/>
<dbReference type="OrthoDB" id="9806791at2"/>
<dbReference type="Proteomes" id="UP000002384">
    <property type="component" value="Chromosome"/>
</dbReference>
<dbReference type="GO" id="GO:0005737">
    <property type="term" value="C:cytoplasm"/>
    <property type="evidence" value="ECO:0007669"/>
    <property type="project" value="UniProtKB-SubCell"/>
</dbReference>
<dbReference type="GO" id="GO:0005524">
    <property type="term" value="F:ATP binding"/>
    <property type="evidence" value="ECO:0007669"/>
    <property type="project" value="InterPro"/>
</dbReference>
<dbReference type="GO" id="GO:0046872">
    <property type="term" value="F:metal ion binding"/>
    <property type="evidence" value="ECO:0007669"/>
    <property type="project" value="TreeGrafter"/>
</dbReference>
<dbReference type="GO" id="GO:0044183">
    <property type="term" value="F:protein folding chaperone"/>
    <property type="evidence" value="ECO:0007669"/>
    <property type="project" value="InterPro"/>
</dbReference>
<dbReference type="GO" id="GO:0051087">
    <property type="term" value="F:protein-folding chaperone binding"/>
    <property type="evidence" value="ECO:0007669"/>
    <property type="project" value="TreeGrafter"/>
</dbReference>
<dbReference type="GO" id="GO:0051082">
    <property type="term" value="F:unfolded protein binding"/>
    <property type="evidence" value="ECO:0007669"/>
    <property type="project" value="TreeGrafter"/>
</dbReference>
<dbReference type="GO" id="GO:0051085">
    <property type="term" value="P:chaperone cofactor-dependent protein refolding"/>
    <property type="evidence" value="ECO:0007669"/>
    <property type="project" value="TreeGrafter"/>
</dbReference>
<dbReference type="CDD" id="cd00320">
    <property type="entry name" value="cpn10"/>
    <property type="match status" value="1"/>
</dbReference>
<dbReference type="FunFam" id="2.30.33.40:FF:000001">
    <property type="entry name" value="10 kDa chaperonin"/>
    <property type="match status" value="1"/>
</dbReference>
<dbReference type="Gene3D" id="2.30.33.40">
    <property type="entry name" value="GroES chaperonin"/>
    <property type="match status" value="1"/>
</dbReference>
<dbReference type="HAMAP" id="MF_00580">
    <property type="entry name" value="CH10"/>
    <property type="match status" value="1"/>
</dbReference>
<dbReference type="InterPro" id="IPR020818">
    <property type="entry name" value="Chaperonin_GroES"/>
</dbReference>
<dbReference type="InterPro" id="IPR037124">
    <property type="entry name" value="Chaperonin_GroES_sf"/>
</dbReference>
<dbReference type="InterPro" id="IPR018369">
    <property type="entry name" value="Chaprnonin_Cpn10_CS"/>
</dbReference>
<dbReference type="InterPro" id="IPR011032">
    <property type="entry name" value="GroES-like_sf"/>
</dbReference>
<dbReference type="NCBIfam" id="NF001530">
    <property type="entry name" value="PRK00364.1-6"/>
    <property type="match status" value="1"/>
</dbReference>
<dbReference type="NCBIfam" id="NF001531">
    <property type="entry name" value="PRK00364.2-2"/>
    <property type="match status" value="1"/>
</dbReference>
<dbReference type="NCBIfam" id="NF001533">
    <property type="entry name" value="PRK00364.2-4"/>
    <property type="match status" value="1"/>
</dbReference>
<dbReference type="NCBIfam" id="NF001534">
    <property type="entry name" value="PRK00364.2-5"/>
    <property type="match status" value="1"/>
</dbReference>
<dbReference type="PANTHER" id="PTHR10772">
    <property type="entry name" value="10 KDA HEAT SHOCK PROTEIN"/>
    <property type="match status" value="1"/>
</dbReference>
<dbReference type="PANTHER" id="PTHR10772:SF58">
    <property type="entry name" value="CO-CHAPERONIN GROES"/>
    <property type="match status" value="1"/>
</dbReference>
<dbReference type="Pfam" id="PF00166">
    <property type="entry name" value="Cpn10"/>
    <property type="match status" value="1"/>
</dbReference>
<dbReference type="PRINTS" id="PR00297">
    <property type="entry name" value="CHAPERONIN10"/>
</dbReference>
<dbReference type="SMART" id="SM00883">
    <property type="entry name" value="Cpn10"/>
    <property type="match status" value="1"/>
</dbReference>
<dbReference type="SUPFAM" id="SSF50129">
    <property type="entry name" value="GroES-like"/>
    <property type="match status" value="1"/>
</dbReference>
<dbReference type="PROSITE" id="PS00681">
    <property type="entry name" value="CHAPERONINS_CPN10"/>
    <property type="match status" value="1"/>
</dbReference>
<comment type="function">
    <text evidence="1">Together with the chaperonin GroEL, plays an essential role in assisting protein folding. The GroEL-GroES system forms a nano-cage that allows encapsulation of the non-native substrate proteins and provides a physical environment optimized to promote and accelerate protein folding. GroES binds to the apical surface of the GroEL ring, thereby capping the opening of the GroEL channel.</text>
</comment>
<comment type="subunit">
    <text evidence="1">Heptamer of 7 subunits arranged in a ring. Interacts with the chaperonin GroEL.</text>
</comment>
<comment type="subcellular location">
    <subcellularLocation>
        <location evidence="1">Cytoplasm</location>
    </subcellularLocation>
</comment>
<comment type="similarity">
    <text evidence="1">Belongs to the GroES chaperonin family.</text>
</comment>
<gene>
    <name evidence="1" type="primary">groES</name>
    <name evidence="1" type="synonym">groS</name>
    <name type="ordered locus">PCC7424_1789</name>
</gene>
<feature type="chain" id="PRO_1000129646" description="Co-chaperonin GroES">
    <location>
        <begin position="1"/>
        <end position="103"/>
    </location>
</feature>